<name>NTPPA_SYMTH</name>
<gene>
    <name type="ordered locus">STH370</name>
</gene>
<accession>Q67SI8</accession>
<organism>
    <name type="scientific">Symbiobacterium thermophilum (strain DSM 24528 / JCM 14929 / IAM 14863 / T)</name>
    <dbReference type="NCBI Taxonomy" id="292459"/>
    <lineage>
        <taxon>Bacteria</taxon>
        <taxon>Bacillati</taxon>
        <taxon>Bacillota</taxon>
        <taxon>Clostridia</taxon>
        <taxon>Eubacteriales</taxon>
        <taxon>Symbiobacteriaceae</taxon>
        <taxon>Symbiobacterium</taxon>
    </lineage>
</organism>
<evidence type="ECO:0000255" key="1">
    <source>
        <dbReference type="HAMAP-Rule" id="MF_00528"/>
    </source>
</evidence>
<feature type="chain" id="PRO_0000267443" description="dTTP/UTP pyrophosphatase">
    <location>
        <begin position="1"/>
        <end position="194"/>
    </location>
</feature>
<feature type="active site" description="Proton acceptor" evidence="1">
    <location>
        <position position="69"/>
    </location>
</feature>
<feature type="site" description="Important for substrate specificity" evidence="1">
    <location>
        <position position="12"/>
    </location>
</feature>
<feature type="site" description="Important for substrate specificity" evidence="1">
    <location>
        <position position="70"/>
    </location>
</feature>
<feature type="site" description="Important for substrate specificity" evidence="1">
    <location>
        <position position="152"/>
    </location>
</feature>
<dbReference type="EC" id="3.6.1.9" evidence="1"/>
<dbReference type="EMBL" id="AP006840">
    <property type="protein sequence ID" value="BAD39355.1"/>
    <property type="molecule type" value="Genomic_DNA"/>
</dbReference>
<dbReference type="RefSeq" id="WP_011194504.1">
    <property type="nucleotide sequence ID" value="NC_006177.1"/>
</dbReference>
<dbReference type="SMR" id="Q67SI8"/>
<dbReference type="STRING" id="292459.STH370"/>
<dbReference type="KEGG" id="sth:STH370"/>
<dbReference type="eggNOG" id="COG0424">
    <property type="taxonomic scope" value="Bacteria"/>
</dbReference>
<dbReference type="HOGENOM" id="CLU_040416_2_1_9"/>
<dbReference type="OrthoDB" id="9807767at2"/>
<dbReference type="Proteomes" id="UP000000417">
    <property type="component" value="Chromosome"/>
</dbReference>
<dbReference type="GO" id="GO:0005737">
    <property type="term" value="C:cytoplasm"/>
    <property type="evidence" value="ECO:0007669"/>
    <property type="project" value="UniProtKB-SubCell"/>
</dbReference>
<dbReference type="GO" id="GO:0036218">
    <property type="term" value="F:dTTP diphosphatase activity"/>
    <property type="evidence" value="ECO:0007669"/>
    <property type="project" value="RHEA"/>
</dbReference>
<dbReference type="GO" id="GO:0036221">
    <property type="term" value="F:UTP diphosphatase activity"/>
    <property type="evidence" value="ECO:0007669"/>
    <property type="project" value="RHEA"/>
</dbReference>
<dbReference type="GO" id="GO:0009117">
    <property type="term" value="P:nucleotide metabolic process"/>
    <property type="evidence" value="ECO:0007669"/>
    <property type="project" value="UniProtKB-KW"/>
</dbReference>
<dbReference type="CDD" id="cd00555">
    <property type="entry name" value="Maf"/>
    <property type="match status" value="1"/>
</dbReference>
<dbReference type="FunFam" id="3.90.950.10:FF:000005">
    <property type="entry name" value="7-methyl-GTP pyrophosphatase"/>
    <property type="match status" value="1"/>
</dbReference>
<dbReference type="Gene3D" id="3.90.950.10">
    <property type="match status" value="1"/>
</dbReference>
<dbReference type="HAMAP" id="MF_00528">
    <property type="entry name" value="Maf"/>
    <property type="match status" value="1"/>
</dbReference>
<dbReference type="InterPro" id="IPR029001">
    <property type="entry name" value="ITPase-like_fam"/>
</dbReference>
<dbReference type="InterPro" id="IPR003697">
    <property type="entry name" value="Maf-like"/>
</dbReference>
<dbReference type="NCBIfam" id="TIGR00172">
    <property type="entry name" value="maf"/>
    <property type="match status" value="1"/>
</dbReference>
<dbReference type="PANTHER" id="PTHR43213">
    <property type="entry name" value="BIFUNCTIONAL DTTP/UTP PYROPHOSPHATASE/METHYLTRANSFERASE PROTEIN-RELATED"/>
    <property type="match status" value="1"/>
</dbReference>
<dbReference type="PANTHER" id="PTHR43213:SF5">
    <property type="entry name" value="BIFUNCTIONAL DTTP_UTP PYROPHOSPHATASE_METHYLTRANSFERASE PROTEIN-RELATED"/>
    <property type="match status" value="1"/>
</dbReference>
<dbReference type="Pfam" id="PF02545">
    <property type="entry name" value="Maf"/>
    <property type="match status" value="1"/>
</dbReference>
<dbReference type="PIRSF" id="PIRSF006305">
    <property type="entry name" value="Maf"/>
    <property type="match status" value="1"/>
</dbReference>
<dbReference type="SUPFAM" id="SSF52972">
    <property type="entry name" value="ITPase-like"/>
    <property type="match status" value="1"/>
</dbReference>
<proteinExistence type="inferred from homology"/>
<protein>
    <recommendedName>
        <fullName evidence="1">dTTP/UTP pyrophosphatase</fullName>
        <shortName evidence="1">dTTPase/UTPase</shortName>
        <ecNumber evidence="1">3.6.1.9</ecNumber>
    </recommendedName>
    <alternativeName>
        <fullName evidence="1">Nucleoside triphosphate pyrophosphatase</fullName>
    </alternativeName>
    <alternativeName>
        <fullName evidence="1">Nucleotide pyrophosphatase</fullName>
        <shortName evidence="1">Nucleotide PPase</shortName>
    </alternativeName>
</protein>
<keyword id="KW-0963">Cytoplasm</keyword>
<keyword id="KW-0378">Hydrolase</keyword>
<keyword id="KW-0546">Nucleotide metabolism</keyword>
<keyword id="KW-1185">Reference proteome</keyword>
<sequence>MQQLILASSSPRRQELLRQVGIPFVVAVPEVDEHAVHADSPAELVERLALRKARAVSVRYPGAIVLGADTIVVVDGEVLGKPADRAEAEWMLGRLSGRSHQVLTGVALVRGDEELVAHEETVVRFAPLSREQIQWYVETGEPMDKAGAYGIQGRAAALIASISGDYYNVVGLPLHRTVQMLTQFGYPIFTGGAG</sequence>
<comment type="function">
    <text evidence="1">Nucleoside triphosphate pyrophosphatase that hydrolyzes dTTP and UTP. May have a dual role in cell division arrest and in preventing the incorporation of modified nucleotides into cellular nucleic acids.</text>
</comment>
<comment type="catalytic activity">
    <reaction evidence="1">
        <text>dTTP + H2O = dTMP + diphosphate + H(+)</text>
        <dbReference type="Rhea" id="RHEA:28534"/>
        <dbReference type="ChEBI" id="CHEBI:15377"/>
        <dbReference type="ChEBI" id="CHEBI:15378"/>
        <dbReference type="ChEBI" id="CHEBI:33019"/>
        <dbReference type="ChEBI" id="CHEBI:37568"/>
        <dbReference type="ChEBI" id="CHEBI:63528"/>
        <dbReference type="EC" id="3.6.1.9"/>
    </reaction>
</comment>
<comment type="catalytic activity">
    <reaction evidence="1">
        <text>UTP + H2O = UMP + diphosphate + H(+)</text>
        <dbReference type="Rhea" id="RHEA:29395"/>
        <dbReference type="ChEBI" id="CHEBI:15377"/>
        <dbReference type="ChEBI" id="CHEBI:15378"/>
        <dbReference type="ChEBI" id="CHEBI:33019"/>
        <dbReference type="ChEBI" id="CHEBI:46398"/>
        <dbReference type="ChEBI" id="CHEBI:57865"/>
        <dbReference type="EC" id="3.6.1.9"/>
    </reaction>
</comment>
<comment type="cofactor">
    <cofactor evidence="1">
        <name>a divalent metal cation</name>
        <dbReference type="ChEBI" id="CHEBI:60240"/>
    </cofactor>
</comment>
<comment type="subcellular location">
    <subcellularLocation>
        <location evidence="1">Cytoplasm</location>
    </subcellularLocation>
</comment>
<comment type="similarity">
    <text evidence="1">Belongs to the Maf family. YhdE subfamily.</text>
</comment>
<reference key="1">
    <citation type="journal article" date="2004" name="Nucleic Acids Res.">
        <title>Genome sequence of Symbiobacterium thermophilum, an uncultivable bacterium that depends on microbial commensalism.</title>
        <authorList>
            <person name="Ueda K."/>
            <person name="Yamashita A."/>
            <person name="Ishikawa J."/>
            <person name="Shimada M."/>
            <person name="Watsuji T."/>
            <person name="Morimura K."/>
            <person name="Ikeda H."/>
            <person name="Hattori M."/>
            <person name="Beppu T."/>
        </authorList>
    </citation>
    <scope>NUCLEOTIDE SEQUENCE [LARGE SCALE GENOMIC DNA]</scope>
    <source>
        <strain>DSM 24528 / JCM 14929 / IAM 14863 / T</strain>
    </source>
</reference>